<protein>
    <recommendedName>
        <fullName evidence="1">Photosystem II reaction center protein H</fullName>
        <shortName evidence="1">PSII-H</shortName>
    </recommendedName>
</protein>
<reference key="1">
    <citation type="journal article" date="2002" name="DNA Res.">
        <title>Complete genome structure of the thermophilic cyanobacterium Thermosynechococcus elongatus BP-1.</title>
        <authorList>
            <person name="Nakamura Y."/>
            <person name="Kaneko T."/>
            <person name="Sato S."/>
            <person name="Ikeuchi M."/>
            <person name="Katoh H."/>
            <person name="Sasamoto S."/>
            <person name="Watanabe A."/>
            <person name="Iriguchi M."/>
            <person name="Kawashima K."/>
            <person name="Kimura T."/>
            <person name="Kishida Y."/>
            <person name="Kiyokawa C."/>
            <person name="Kohara M."/>
            <person name="Matsumoto M."/>
            <person name="Matsuno A."/>
            <person name="Nakazaki N."/>
            <person name="Shimpo S."/>
            <person name="Sugimoto M."/>
            <person name="Takeuchi C."/>
            <person name="Yamada M."/>
            <person name="Tabata S."/>
        </authorList>
    </citation>
    <scope>NUCLEOTIDE SEQUENCE [LARGE SCALE GENOMIC DNA]</scope>
    <source>
        <strain>NIES-2133 / IAM M-273 / BP-1</strain>
    </source>
</reference>
<reference key="2">
    <citation type="journal article" date="2007" name="Biochim. Biophys. Acta">
        <title>Ycf12 is a core subunit in the photosystem II complex.</title>
        <authorList>
            <person name="Kashino Y."/>
            <person name="Takahashi T."/>
            <person name="Inoue-Kashino N."/>
            <person name="Ban A."/>
            <person name="Ikeda Y."/>
            <person name="Satoh K."/>
            <person name="Sugiura M."/>
        </authorList>
    </citation>
    <scope>PROTEIN SEQUENCE OF 2-8</scope>
    <scope>CLEAVAGE OF INITIATOR METHIONINE</scope>
    <scope>COFACTOR</scope>
    <scope>SUBCELLULAR LOCATION</scope>
</reference>
<reference key="3">
    <citation type="journal article" date="2006" name="Photosyn. Res.">
        <title>Absence of the psbH gene product destabilizes the Photosystem II complex and prevents association of the Photosystem II-X protein in the thermophilic cyanobacterium Thermosynechococcus elongatus BP-1.</title>
        <authorList>
            <person name="Iwai M."/>
            <person name="Katayama M."/>
            <person name="Ikeuchi M."/>
        </authorList>
    </citation>
    <scope>FUNCTION</scope>
    <scope>DISRUPTION PHENOTYPE</scope>
    <source>
        <strain>NIES-2133 / IAM M-273 / BP-1</strain>
    </source>
</reference>
<reference key="4">
    <citation type="journal article" date="2004" name="Science">
        <title>Architecture of the photosynthetic oxygen-evolving center.</title>
        <authorList>
            <person name="Ferreira K.N."/>
            <person name="Iverson T.M."/>
            <person name="Maghlaoui K."/>
            <person name="Barber J."/>
            <person name="Iwata S."/>
        </authorList>
    </citation>
    <scope>X-RAY CRYSTALLOGRAPHY (3.50 ANGSTROMS) IN PHOTOSYSTEM II</scope>
    <scope>COFACTOR</scope>
    <scope>SUBUNIT</scope>
    <scope>SUBCELLULAR LOCATION</scope>
</reference>
<reference key="5">
    <citation type="journal article" date="2005" name="Nature">
        <title>Towards complete cofactor arrangement in the 3.0 A resolution structure of photosystem II.</title>
        <authorList>
            <person name="Loll B."/>
            <person name="Kern J."/>
            <person name="Saenger W."/>
            <person name="Zouni A."/>
            <person name="Biesiadka J."/>
        </authorList>
    </citation>
    <scope>X-RAY CRYSTALLOGRAPHY (3.00 ANGSTROMS) IN PHOTOSYSTEM II</scope>
    <scope>COFACTOR</scope>
    <scope>SUBUNIT</scope>
    <scope>SUBCELLULAR LOCATION</scope>
    <source>
        <strain>NIES-2133 / IAM M-273 / BP-1</strain>
    </source>
</reference>
<reference key="6">
    <citation type="journal article" date="2009" name="Nat. Struct. Mol. Biol.">
        <title>Cyanobacterial photosystem II at 2.9-A resolution and the role of quinones, lipids, channels and chloride.</title>
        <authorList>
            <person name="Guskov A."/>
            <person name="Kern J."/>
            <person name="Gabdulkhakov A."/>
            <person name="Broser M."/>
            <person name="Zouni A."/>
            <person name="Saenger W."/>
        </authorList>
    </citation>
    <scope>X-RAY CRYSTALLOGRAPHY (2.90 ANGSTROMS) IN PHOTOSYSTEM II</scope>
    <scope>COFACTOR</scope>
    <scope>SUBUNIT</scope>
    <scope>SUBCELLULAR LOCATION</scope>
    <scope>MASS SPECTROMETRY</scope>
    <scope>TOPOLOGY</scope>
    <source>
        <strain>NIES-2133 / IAM M-273 / BP-1</strain>
    </source>
</reference>
<reference key="7">
    <citation type="journal article" date="2010" name="J. Biol. Chem.">
        <title>Crystal structure of monomeric photosystem II from Thermosynechococcus elongatus at 3.6 A resolution.</title>
        <authorList>
            <person name="Broser M."/>
            <person name="Gabdulkhakov A."/>
            <person name="Kern J."/>
            <person name="Guskov A."/>
            <person name="Muh F."/>
            <person name="Saenger W."/>
            <person name="Zouni A."/>
        </authorList>
    </citation>
    <scope>X-RAY CRYSTALLOGRAPHY (3.60 ANGSTROMS) OF 2-66 IN PHOTOSYSTEM II</scope>
    <scope>FUNCTION</scope>
    <scope>COFACTOR</scope>
    <scope>SUBUNIT</scope>
    <scope>SUBCELLULAR LOCATION</scope>
    <scope>MASS SPECTROMETRY</scope>
    <source>
        <strain>NIES-2133 / IAM M-273 / BP-1</strain>
    </source>
</reference>
<reference key="8">
    <citation type="journal article" date="2011" name="J. Biol. Chem.">
        <title>Structural basis of cyanobacterial photosystem II inhibition by the herbicide terbutryn.</title>
        <authorList>
            <person name="Broser M."/>
            <person name="Glockner C."/>
            <person name="Gabdulkhakov A."/>
            <person name="Guskov A."/>
            <person name="Buchta J."/>
            <person name="Kern J."/>
            <person name="Muh F."/>
            <person name="Dau H."/>
            <person name="Saenger W."/>
            <person name="Zouni A."/>
        </authorList>
    </citation>
    <scope>X-RAY CRYSTALLOGRAPHY (3.20 ANGSTROMS) IN PHOTOSYSTEM II</scope>
    <scope>FUNCTION</scope>
    <scope>COFACTOR</scope>
    <scope>SUBUNIT</scope>
    <scope>SUBCELLULAR LOCATION</scope>
</reference>
<reference key="9">
    <citation type="journal article" date="2012" name="Proc. Natl. Acad. Sci. U.S.A.">
        <title>Room temperature femtosecond X-ray diffraction of photosystem II microcrystals.</title>
        <authorList>
            <person name="Kern J."/>
            <person name="Alonso-Mori R."/>
            <person name="Hellmich J."/>
            <person name="Tran R."/>
            <person name="Hattne J."/>
            <person name="Laksmono H."/>
            <person name="Glockner C."/>
            <person name="Echols N."/>
            <person name="Sierra R.G."/>
            <person name="Sellberg J."/>
            <person name="Lassalle-Kaiser B."/>
            <person name="Gildea R.J."/>
            <person name="Glatzel P."/>
            <person name="Grosse-Kunstleve R.W."/>
            <person name="Latimer M.J."/>
            <person name="McQueen T.A."/>
            <person name="DiFiore D."/>
            <person name="Fry A.R."/>
            <person name="Messerschmidt M."/>
            <person name="Miahnahri A."/>
            <person name="Schafer D.W."/>
            <person name="Seibert M.M."/>
            <person name="Sokaras D."/>
            <person name="Weng T.C."/>
            <person name="Zwart P.H."/>
            <person name="White W.E."/>
            <person name="Adams P.D."/>
            <person name="Bogan M.J."/>
            <person name="Boutet S."/>
            <person name="Williams G.J."/>
            <person name="Messinger J."/>
            <person name="Sauter N.K."/>
            <person name="Zouni A."/>
            <person name="Bergmann U."/>
            <person name="Yano J."/>
            <person name="Yachandra V.K."/>
        </authorList>
    </citation>
    <scope>X-RAY CRYSTALLOGRAPHY (6.56 ANGSTROMS) OF 2-66 IN PHOTOSYSTEM II</scope>
    <scope>COFACTOR</scope>
    <scope>SUBUNIT</scope>
    <scope>SUBCELLULAR LOCATION</scope>
    <source>
        <strain>NIES-2133 / IAM M-273 / BP-1</strain>
    </source>
</reference>
<reference key="10">
    <citation type="journal article" date="2013" name="Science">
        <title>Simultaneous femtosecond X-ray spectroscopy and diffraction of photosystem II at room temperature.</title>
        <authorList>
            <person name="Kern J."/>
            <person name="Alonso-Mori R."/>
            <person name="Tran R."/>
            <person name="Hattne J."/>
            <person name="Gildea R.J."/>
            <person name="Echols N."/>
            <person name="Glockner C."/>
            <person name="Hellmich J."/>
            <person name="Laksmono H."/>
            <person name="Sierra R.G."/>
            <person name="Lassalle-Kaiser B."/>
            <person name="Koroidov S."/>
            <person name="Lampe A."/>
            <person name="Han G."/>
            <person name="Gul S."/>
            <person name="Difiore D."/>
            <person name="Milathianaki D."/>
            <person name="Fry A.R."/>
            <person name="Miahnahri A."/>
            <person name="Schafer D.W."/>
            <person name="Messerschmidt M."/>
            <person name="Seibert M.M."/>
            <person name="Koglin J.E."/>
            <person name="Sokaras D."/>
            <person name="Weng T.C."/>
            <person name="Sellberg J."/>
            <person name="Latimer M.J."/>
            <person name="Grosse-Kunstleve R.W."/>
            <person name="Zwart P.H."/>
            <person name="White W.E."/>
            <person name="Glatzel P."/>
            <person name="Adams P.D."/>
            <person name="Bogan M.J."/>
            <person name="Williams G.J."/>
            <person name="Boutet S."/>
            <person name="Messinger J."/>
            <person name="Zouni A."/>
            <person name="Sauter N.K."/>
            <person name="Yachandra V.K."/>
            <person name="Bergmann U."/>
            <person name="Yano J."/>
        </authorList>
    </citation>
    <scope>X-RAY CRYSTALLOGRAPHY (5.70 ANGSTROMS) IN PHOTOSYSTEM II</scope>
    <scope>COFACTOR</scope>
    <scope>SUBUNIT</scope>
    <scope>SUBCELLULAR LOCATION</scope>
    <source>
        <strain>NIES-2133 / IAM M-273 / BP-1</strain>
    </source>
</reference>
<reference key="11">
    <citation type="journal article" date="2014" name="Nature">
        <title>Serial time-resolved crystallography of photosystem II using a femtosecond X-ray laser.</title>
        <authorList>
            <person name="Kupitz C."/>
            <person name="Basu S."/>
            <person name="Grotjohann I."/>
            <person name="Fromme R."/>
            <person name="Zatsepin N.A."/>
            <person name="Rendek K.N."/>
            <person name="Hunter M.S."/>
            <person name="Shoeman R.L."/>
            <person name="White T.A."/>
            <person name="Wang D."/>
            <person name="James D."/>
            <person name="Yang J.H."/>
            <person name="Cobb D.E."/>
            <person name="Reeder B."/>
            <person name="Sierra R.G."/>
            <person name="Liu H."/>
            <person name="Barty A."/>
            <person name="Aquila A.L."/>
            <person name="Deponte D."/>
            <person name="Kirian R.A."/>
            <person name="Bari S."/>
            <person name="Bergkamp J.J."/>
            <person name="Beyerlein K.R."/>
            <person name="Bogan M.J."/>
            <person name="Caleman C."/>
            <person name="Chao T.C."/>
            <person name="Conrad C.E."/>
            <person name="Davis K.M."/>
            <person name="Fleckenstein H."/>
            <person name="Galli L."/>
            <person name="Hau-Riege S.P."/>
            <person name="Kassemeyer S."/>
            <person name="Laksmono H."/>
            <person name="Liang M."/>
            <person name="Lomb L."/>
            <person name="Marchesini S."/>
            <person name="Martin A.V."/>
            <person name="Messerschmidt M."/>
            <person name="Milathianaki D."/>
            <person name="Nass K."/>
            <person name="Ros A."/>
            <person name="Roy-Chowdhury S."/>
            <person name="Schmidt K."/>
            <person name="Seibert M."/>
            <person name="Steinbrener J."/>
            <person name="Stellato F."/>
            <person name="Yan L."/>
            <person name="Yoon C."/>
            <person name="Moore T.A."/>
            <person name="Moore A.L."/>
            <person name="Pushkar Y."/>
            <person name="Williams G.J."/>
            <person name="Boutet S."/>
            <person name="Doak R.B."/>
            <person name="Weierstall U."/>
            <person name="Frank M."/>
            <person name="Chapman H.N."/>
            <person name="Spence J.C."/>
            <person name="Fromme P."/>
        </authorList>
    </citation>
    <scope>X-RAY CRYSTALLOGRAPHY (5.00 ANGSTROMS) OF 2-66 IN PHOTOSYSTEM II</scope>
    <scope>COFACTOR</scope>
    <scope>SUBUNIT</scope>
    <scope>SUBCELLULAR LOCATION</scope>
    <source>
        <strain>NIES-2133 / IAM M-273 / BP-1</strain>
    </source>
</reference>
<reference key="12">
    <citation type="journal article" date="2014" name="Nat. Commun.">
        <title>Taking snapshots of photosynthetic water oxidation using femtosecond X-ray diffraction and spectroscopy.</title>
        <authorList>
            <person name="Kern J."/>
            <person name="Tran R."/>
            <person name="Alonso-Mori R."/>
            <person name="Koroidov S."/>
            <person name="Echols N."/>
            <person name="Hattne J."/>
            <person name="Ibrahim M."/>
            <person name="Gul S."/>
            <person name="Laksmono H."/>
            <person name="Sierra R.G."/>
            <person name="Gildea R.J."/>
            <person name="Han G."/>
            <person name="Hellmich J."/>
            <person name="Lassalle-Kaiser B."/>
            <person name="Chatterjee R."/>
            <person name="Brewster A.S."/>
            <person name="Stan C.A."/>
            <person name="Gloeckner C."/>
            <person name="Lampe A."/>
            <person name="DiFiore D."/>
            <person name="Milathianaki D."/>
            <person name="Fry A.R."/>
            <person name="Seibert M.M."/>
            <person name="Koglin J.E."/>
            <person name="Gallo E."/>
            <person name="Uhlig J."/>
            <person name="Sokaras D."/>
            <person name="Weng T.C."/>
            <person name="Zwart P.H."/>
            <person name="Skinner D.E."/>
            <person name="Bogan M.J."/>
            <person name="Messerschmidt M."/>
            <person name="Glatzel P."/>
            <person name="Williams G.J."/>
            <person name="Boutet S."/>
            <person name="Adams P.D."/>
            <person name="Zouni A."/>
            <person name="Messinger J."/>
            <person name="Sauter N.K."/>
            <person name="Bergmann U."/>
            <person name="Yano J."/>
            <person name="Yachandra V.K."/>
        </authorList>
    </citation>
    <scope>X-RAY CRYSTALLOGRAPHY (4.50 ANGSTROMS) IN PHOTOSYSTEM II</scope>
    <scope>FUNCTION</scope>
    <scope>COFACTOR</scope>
    <scope>SUBUNIT</scope>
    <scope>SUBCELLULAR LOCATION</scope>
    <source>
        <strain>NIES-2133 / IAM M-273 / BP-1</strain>
    </source>
</reference>
<reference evidence="14 15 16" key="13">
    <citation type="journal article" date="2021" name="Nat. Plants">
        <title>Structural insights into photosystem II assembly.</title>
        <authorList>
            <person name="Zabret J."/>
            <person name="Bohn S."/>
            <person name="Schuller S.K."/>
            <person name="Arnolds O."/>
            <person name="Moller M."/>
            <person name="Meier-Credo J."/>
            <person name="Liauw P."/>
            <person name="Chan A."/>
            <person name="Tajkhorshid E."/>
            <person name="Langer J.D."/>
            <person name="Stoll R."/>
            <person name="Krieger-Liszkay A."/>
            <person name="Engel B.D."/>
            <person name="Rudack T."/>
            <person name="Schuller J.M."/>
            <person name="Nowaczyk M.M."/>
        </authorList>
    </citation>
    <scope>STRUCTURE BY ELECTRON MICROSCOPY (2.68 ANGSTROMS) IN PSII-I ASSEMBLY COMPLEX</scope>
    <scope>SUBUNIT</scope>
    <scope>SUBCELLULAR LOCATION</scope>
    <scope>TOPOLOGY</scope>
    <source>
        <strain>NIES-2133 / IAM M-273 / BP-1</strain>
    </source>
</reference>
<proteinExistence type="evidence at protein level"/>
<sequence>MARRTWLGDILRPLNSEYGKVAPGWGTTPLMAVFMGLFLVFLLIILEIYNSTLILDGVNVSWKALG</sequence>
<gene>
    <name evidence="1" type="primary">psbH</name>
    <name type="ordered locus">tsl1386</name>
</gene>
<feature type="initiator methionine" description="Removed" evidence="5 6 7">
    <location>
        <position position="1"/>
    </location>
</feature>
<feature type="chain" id="PRO_0000070546" description="Photosystem II reaction center protein H">
    <location>
        <begin position="2"/>
        <end position="66"/>
    </location>
</feature>
<feature type="topological domain" description="Cytoplasmic" evidence="13 16">
    <location>
        <begin position="2"/>
        <end position="27"/>
    </location>
</feature>
<feature type="transmembrane region" description="Helical" evidence="13 16">
    <location>
        <begin position="28"/>
        <end position="47"/>
    </location>
</feature>
<feature type="topological domain" description="Lumenal" evidence="13 16">
    <location>
        <begin position="48"/>
        <end position="66"/>
    </location>
</feature>
<feature type="helix" evidence="19">
    <location>
        <begin position="6"/>
        <end position="11"/>
    </location>
</feature>
<feature type="helix" evidence="19">
    <location>
        <begin position="12"/>
        <end position="15"/>
    </location>
</feature>
<feature type="strand" evidence="18">
    <location>
        <begin position="18"/>
        <end position="23"/>
    </location>
</feature>
<feature type="turn" evidence="19">
    <location>
        <begin position="24"/>
        <end position="27"/>
    </location>
</feature>
<feature type="helix" evidence="19">
    <location>
        <begin position="28"/>
        <end position="49"/>
    </location>
</feature>
<feature type="turn" evidence="17">
    <location>
        <begin position="56"/>
        <end position="58"/>
    </location>
</feature>
<feature type="helix" evidence="19">
    <location>
        <begin position="62"/>
        <end position="64"/>
    </location>
</feature>
<keyword id="KW-0002">3D-structure</keyword>
<keyword id="KW-0903">Direct protein sequencing</keyword>
<keyword id="KW-0472">Membrane</keyword>
<keyword id="KW-0602">Photosynthesis</keyword>
<keyword id="KW-0604">Photosystem II</keyword>
<keyword id="KW-1185">Reference proteome</keyword>
<keyword id="KW-0793">Thylakoid</keyword>
<keyword id="KW-0812">Transmembrane</keyword>
<keyword id="KW-1133">Transmembrane helix</keyword>
<evidence type="ECO:0000255" key="1">
    <source>
        <dbReference type="HAMAP-Rule" id="MF_00752"/>
    </source>
</evidence>
<evidence type="ECO:0000269" key="2">
    <source>
    </source>
</evidence>
<evidence type="ECO:0000269" key="3">
    <source>
    </source>
</evidence>
<evidence type="ECO:0000269" key="4">
    <source>
    </source>
</evidence>
<evidence type="ECO:0000269" key="5">
    <source>
    </source>
</evidence>
<evidence type="ECO:0000269" key="6">
    <source>
    </source>
</evidence>
<evidence type="ECO:0000269" key="7">
    <source>
    </source>
</evidence>
<evidence type="ECO:0000269" key="8">
    <source>
    </source>
</evidence>
<evidence type="ECO:0000269" key="9">
    <source>
    </source>
</evidence>
<evidence type="ECO:0000269" key="10">
    <source>
    </source>
</evidence>
<evidence type="ECO:0000269" key="11">
    <source>
    </source>
</evidence>
<evidence type="ECO:0000269" key="12">
    <source>
    </source>
</evidence>
<evidence type="ECO:0000269" key="13">
    <source>
    </source>
</evidence>
<evidence type="ECO:0007744" key="14">
    <source>
        <dbReference type="PDB" id="7NHO"/>
    </source>
</evidence>
<evidence type="ECO:0007744" key="15">
    <source>
        <dbReference type="PDB" id="7NHP"/>
    </source>
</evidence>
<evidence type="ECO:0007744" key="16">
    <source>
        <dbReference type="PDB" id="7NHQ"/>
    </source>
</evidence>
<evidence type="ECO:0007829" key="17">
    <source>
        <dbReference type="PDB" id="2AXT"/>
    </source>
</evidence>
<evidence type="ECO:0007829" key="18">
    <source>
        <dbReference type="PDB" id="7NHQ"/>
    </source>
</evidence>
<evidence type="ECO:0007829" key="19">
    <source>
        <dbReference type="PDB" id="7YQ2"/>
    </source>
</evidence>
<dbReference type="EMBL" id="BA000039">
    <property type="protein sequence ID" value="BAC08938.1"/>
    <property type="molecule type" value="Genomic_DNA"/>
</dbReference>
<dbReference type="RefSeq" id="NP_682176.1">
    <property type="nucleotide sequence ID" value="NC_004113.1"/>
</dbReference>
<dbReference type="RefSeq" id="WP_011057226.1">
    <property type="nucleotide sequence ID" value="NC_004113.1"/>
</dbReference>
<dbReference type="PDB" id="1S5L">
    <property type="method" value="X-ray"/>
    <property type="resolution" value="3.50 A"/>
    <property type="chains" value="H/h=1-66"/>
</dbReference>
<dbReference type="PDB" id="2AXT">
    <property type="method" value="X-ray"/>
    <property type="resolution" value="3.00 A"/>
    <property type="chains" value="H/h=1-66"/>
</dbReference>
<dbReference type="PDB" id="3KZI">
    <property type="method" value="X-ray"/>
    <property type="resolution" value="3.60 A"/>
    <property type="chains" value="H=2-66"/>
</dbReference>
<dbReference type="PDB" id="4FBY">
    <property type="method" value="X-ray"/>
    <property type="resolution" value="6.56 A"/>
    <property type="chains" value="H/W=2-66"/>
</dbReference>
<dbReference type="PDB" id="4IXQ">
    <property type="method" value="X-ray"/>
    <property type="resolution" value="5.70 A"/>
    <property type="chains" value="H/h=1-66"/>
</dbReference>
<dbReference type="PDB" id="4IXR">
    <property type="method" value="X-ray"/>
    <property type="resolution" value="5.90 A"/>
    <property type="chains" value="H/h=1-66"/>
</dbReference>
<dbReference type="PDB" id="4PBU">
    <property type="method" value="X-ray"/>
    <property type="resolution" value="5.00 A"/>
    <property type="chains" value="H/h=2-66"/>
</dbReference>
<dbReference type="PDB" id="4PJ0">
    <property type="method" value="X-ray"/>
    <property type="resolution" value="2.44 A"/>
    <property type="chains" value="H/h=1-66"/>
</dbReference>
<dbReference type="PDB" id="4RVY">
    <property type="method" value="X-ray"/>
    <property type="resolution" value="5.50 A"/>
    <property type="chains" value="H/h=2-66"/>
</dbReference>
<dbReference type="PDB" id="4TNH">
    <property type="method" value="X-ray"/>
    <property type="resolution" value="4.90 A"/>
    <property type="chains" value="H/h=1-66"/>
</dbReference>
<dbReference type="PDB" id="4TNI">
    <property type="method" value="X-ray"/>
    <property type="resolution" value="4.60 A"/>
    <property type="chains" value="H/h=1-66"/>
</dbReference>
<dbReference type="PDB" id="4TNJ">
    <property type="method" value="X-ray"/>
    <property type="resolution" value="4.50 A"/>
    <property type="chains" value="H/h=1-66"/>
</dbReference>
<dbReference type="PDB" id="4TNK">
    <property type="method" value="X-ray"/>
    <property type="resolution" value="5.20 A"/>
    <property type="chains" value="H/h=1-66"/>
</dbReference>
<dbReference type="PDB" id="4V62">
    <property type="method" value="X-ray"/>
    <property type="resolution" value="2.90 A"/>
    <property type="chains" value="AH/BH=1-66"/>
</dbReference>
<dbReference type="PDB" id="4V82">
    <property type="method" value="X-ray"/>
    <property type="resolution" value="3.20 A"/>
    <property type="chains" value="AH/BH=1-66"/>
</dbReference>
<dbReference type="PDB" id="5E79">
    <property type="method" value="X-ray"/>
    <property type="resolution" value="3.50 A"/>
    <property type="chains" value="H/h=2-66"/>
</dbReference>
<dbReference type="PDB" id="5E7C">
    <property type="method" value="X-ray"/>
    <property type="resolution" value="4.50 A"/>
    <property type="chains" value="H/h=2-66"/>
</dbReference>
<dbReference type="PDB" id="5H2F">
    <property type="method" value="X-ray"/>
    <property type="resolution" value="2.20 A"/>
    <property type="chains" value="H/h=2-64"/>
</dbReference>
<dbReference type="PDB" id="5KAF">
    <property type="method" value="X-ray"/>
    <property type="resolution" value="3.00 A"/>
    <property type="chains" value="H/h=1-66"/>
</dbReference>
<dbReference type="PDB" id="5KAI">
    <property type="method" value="X-ray"/>
    <property type="resolution" value="2.80 A"/>
    <property type="chains" value="H/h=2-64"/>
</dbReference>
<dbReference type="PDB" id="5MX2">
    <property type="method" value="X-ray"/>
    <property type="resolution" value="2.20 A"/>
    <property type="chains" value="H/h=1-66"/>
</dbReference>
<dbReference type="PDB" id="5TIS">
    <property type="method" value="X-ray"/>
    <property type="resolution" value="2.25 A"/>
    <property type="chains" value="H/h=1-66"/>
</dbReference>
<dbReference type="PDB" id="5ZZN">
    <property type="method" value="X-ray"/>
    <property type="resolution" value="2.10 A"/>
    <property type="chains" value="H/h=2-64"/>
</dbReference>
<dbReference type="PDB" id="6DHE">
    <property type="method" value="X-ray"/>
    <property type="resolution" value="2.05 A"/>
    <property type="chains" value="H/h=2-66"/>
</dbReference>
<dbReference type="PDB" id="6DHF">
    <property type="method" value="X-ray"/>
    <property type="resolution" value="2.08 A"/>
    <property type="chains" value="H/h=2-66"/>
</dbReference>
<dbReference type="PDB" id="6DHG">
    <property type="method" value="X-ray"/>
    <property type="resolution" value="2.50 A"/>
    <property type="chains" value="H/h=2-66"/>
</dbReference>
<dbReference type="PDB" id="6DHH">
    <property type="method" value="X-ray"/>
    <property type="resolution" value="2.20 A"/>
    <property type="chains" value="H/h=2-66"/>
</dbReference>
<dbReference type="PDB" id="6DHO">
    <property type="method" value="X-ray"/>
    <property type="resolution" value="2.07 A"/>
    <property type="chains" value="H/h=2-66"/>
</dbReference>
<dbReference type="PDB" id="6DHP">
    <property type="method" value="X-ray"/>
    <property type="resolution" value="2.04 A"/>
    <property type="chains" value="H/h=2-66"/>
</dbReference>
<dbReference type="PDB" id="6W1O">
    <property type="method" value="X-ray"/>
    <property type="resolution" value="2.08 A"/>
    <property type="chains" value="H/h=1-66"/>
</dbReference>
<dbReference type="PDB" id="6W1P">
    <property type="method" value="X-ray"/>
    <property type="resolution" value="2.26 A"/>
    <property type="chains" value="H/h=1-66"/>
</dbReference>
<dbReference type="PDB" id="6W1Q">
    <property type="method" value="X-ray"/>
    <property type="resolution" value="2.27 A"/>
    <property type="chains" value="H/h=1-66"/>
</dbReference>
<dbReference type="PDB" id="6W1R">
    <property type="method" value="X-ray"/>
    <property type="resolution" value="2.23 A"/>
    <property type="chains" value="H/h=1-66"/>
</dbReference>
<dbReference type="PDB" id="6W1T">
    <property type="method" value="X-ray"/>
    <property type="resolution" value="2.01 A"/>
    <property type="chains" value="H/h=1-66"/>
</dbReference>
<dbReference type="PDB" id="6W1U">
    <property type="method" value="X-ray"/>
    <property type="resolution" value="2.09 A"/>
    <property type="chains" value="H/h=1-66"/>
</dbReference>
<dbReference type="PDB" id="6W1V">
    <property type="method" value="X-ray"/>
    <property type="resolution" value="2.09 A"/>
    <property type="chains" value="H/h=1-66"/>
</dbReference>
<dbReference type="PDB" id="7NHO">
    <property type="method" value="EM"/>
    <property type="resolution" value="2.66 A"/>
    <property type="chains" value="H=1-66"/>
</dbReference>
<dbReference type="PDB" id="7NHP">
    <property type="method" value="EM"/>
    <property type="resolution" value="2.72 A"/>
    <property type="chains" value="H=1-66"/>
</dbReference>
<dbReference type="PDB" id="7NHQ">
    <property type="method" value="EM"/>
    <property type="resolution" value="2.68 A"/>
    <property type="chains" value="H=1-66"/>
</dbReference>
<dbReference type="PDB" id="7RF1">
    <property type="method" value="X-ray"/>
    <property type="resolution" value="1.89 A"/>
    <property type="chains" value="H/h=1-66"/>
</dbReference>
<dbReference type="PDB" id="7RF2">
    <property type="method" value="X-ray"/>
    <property type="resolution" value="2.08 A"/>
    <property type="chains" value="H/h=1-66"/>
</dbReference>
<dbReference type="PDB" id="7RF3">
    <property type="method" value="X-ray"/>
    <property type="resolution" value="2.26 A"/>
    <property type="chains" value="H/h=1-66"/>
</dbReference>
<dbReference type="PDB" id="7RF4">
    <property type="method" value="X-ray"/>
    <property type="resolution" value="2.27 A"/>
    <property type="chains" value="H/h=1-66"/>
</dbReference>
<dbReference type="PDB" id="7RF5">
    <property type="method" value="X-ray"/>
    <property type="resolution" value="2.23 A"/>
    <property type="chains" value="H/h=1-66"/>
</dbReference>
<dbReference type="PDB" id="7RF6">
    <property type="method" value="X-ray"/>
    <property type="resolution" value="2.01 A"/>
    <property type="chains" value="H/h=1-66"/>
</dbReference>
<dbReference type="PDB" id="7RF7">
    <property type="method" value="X-ray"/>
    <property type="resolution" value="2.09 A"/>
    <property type="chains" value="H/h=1-66"/>
</dbReference>
<dbReference type="PDB" id="7RF8">
    <property type="method" value="X-ray"/>
    <property type="resolution" value="2.09 A"/>
    <property type="chains" value="H/h=1-66"/>
</dbReference>
<dbReference type="PDB" id="7YQ2">
    <property type="method" value="X-ray"/>
    <property type="resolution" value="1.90 A"/>
    <property type="chains" value="H/h=1-66"/>
</dbReference>
<dbReference type="PDB" id="7YQ7">
    <property type="method" value="X-ray"/>
    <property type="resolution" value="1.90 A"/>
    <property type="chains" value="H/h=1-66"/>
</dbReference>
<dbReference type="PDB" id="8EZ5">
    <property type="method" value="X-ray"/>
    <property type="resolution" value="2.09 A"/>
    <property type="chains" value="H/h=1-66"/>
</dbReference>
<dbReference type="PDB" id="8F4C">
    <property type="method" value="X-ray"/>
    <property type="resolution" value="2.00 A"/>
    <property type="chains" value="H/h=1-66"/>
</dbReference>
<dbReference type="PDB" id="8F4D">
    <property type="method" value="X-ray"/>
    <property type="resolution" value="2.15 A"/>
    <property type="chains" value="H/h=1-66"/>
</dbReference>
<dbReference type="PDB" id="8F4E">
    <property type="method" value="X-ray"/>
    <property type="resolution" value="2.09 A"/>
    <property type="chains" value="H/h=1-66"/>
</dbReference>
<dbReference type="PDB" id="8F4F">
    <property type="method" value="X-ray"/>
    <property type="resolution" value="2.03 A"/>
    <property type="chains" value="H/h=1-66"/>
</dbReference>
<dbReference type="PDB" id="8F4G">
    <property type="method" value="X-ray"/>
    <property type="resolution" value="2.03 A"/>
    <property type="chains" value="H/h=1-66"/>
</dbReference>
<dbReference type="PDB" id="8F4H">
    <property type="method" value="X-ray"/>
    <property type="resolution" value="2.10 A"/>
    <property type="chains" value="H/h=1-66"/>
</dbReference>
<dbReference type="PDB" id="8F4I">
    <property type="method" value="X-ray"/>
    <property type="resolution" value="2.00 A"/>
    <property type="chains" value="H/h=1-66"/>
</dbReference>
<dbReference type="PDB" id="8F4J">
    <property type="method" value="X-ray"/>
    <property type="resolution" value="2.00 A"/>
    <property type="chains" value="H/h=1-66"/>
</dbReference>
<dbReference type="PDB" id="8F4K">
    <property type="method" value="X-ray"/>
    <property type="resolution" value="2.16 A"/>
    <property type="chains" value="H/h=1-66"/>
</dbReference>
<dbReference type="PDB" id="9EVX">
    <property type="method" value="EM"/>
    <property type="resolution" value="1.71 A"/>
    <property type="chains" value="H/h=1-66"/>
</dbReference>
<dbReference type="PDBsum" id="1S5L"/>
<dbReference type="PDBsum" id="2AXT"/>
<dbReference type="PDBsum" id="3KZI"/>
<dbReference type="PDBsum" id="4FBY"/>
<dbReference type="PDBsum" id="4IXQ"/>
<dbReference type="PDBsum" id="4IXR"/>
<dbReference type="PDBsum" id="4PBU"/>
<dbReference type="PDBsum" id="4PJ0"/>
<dbReference type="PDBsum" id="4RVY"/>
<dbReference type="PDBsum" id="4TNH"/>
<dbReference type="PDBsum" id="4TNI"/>
<dbReference type="PDBsum" id="4TNJ"/>
<dbReference type="PDBsum" id="4TNK"/>
<dbReference type="PDBsum" id="4V62"/>
<dbReference type="PDBsum" id="4V82"/>
<dbReference type="PDBsum" id="5E79"/>
<dbReference type="PDBsum" id="5E7C"/>
<dbReference type="PDBsum" id="5H2F"/>
<dbReference type="PDBsum" id="5KAF"/>
<dbReference type="PDBsum" id="5KAI"/>
<dbReference type="PDBsum" id="5MX2"/>
<dbReference type="PDBsum" id="5TIS"/>
<dbReference type="PDBsum" id="5ZZN"/>
<dbReference type="PDBsum" id="6DHE"/>
<dbReference type="PDBsum" id="6DHF"/>
<dbReference type="PDBsum" id="6DHG"/>
<dbReference type="PDBsum" id="6DHH"/>
<dbReference type="PDBsum" id="6DHO"/>
<dbReference type="PDBsum" id="6DHP"/>
<dbReference type="PDBsum" id="6W1O"/>
<dbReference type="PDBsum" id="6W1P"/>
<dbReference type="PDBsum" id="6W1Q"/>
<dbReference type="PDBsum" id="6W1R"/>
<dbReference type="PDBsum" id="6W1T"/>
<dbReference type="PDBsum" id="6W1U"/>
<dbReference type="PDBsum" id="6W1V"/>
<dbReference type="PDBsum" id="7NHO"/>
<dbReference type="PDBsum" id="7NHP"/>
<dbReference type="PDBsum" id="7NHQ"/>
<dbReference type="PDBsum" id="7RF1"/>
<dbReference type="PDBsum" id="7RF2"/>
<dbReference type="PDBsum" id="7RF3"/>
<dbReference type="PDBsum" id="7RF4"/>
<dbReference type="PDBsum" id="7RF5"/>
<dbReference type="PDBsum" id="7RF6"/>
<dbReference type="PDBsum" id="7RF7"/>
<dbReference type="PDBsum" id="7RF8"/>
<dbReference type="PDBsum" id="7YQ2"/>
<dbReference type="PDBsum" id="7YQ7"/>
<dbReference type="PDBsum" id="8EZ5"/>
<dbReference type="PDBsum" id="8F4C"/>
<dbReference type="PDBsum" id="8F4D"/>
<dbReference type="PDBsum" id="8F4E"/>
<dbReference type="PDBsum" id="8F4F"/>
<dbReference type="PDBsum" id="8F4G"/>
<dbReference type="PDBsum" id="8F4H"/>
<dbReference type="PDBsum" id="8F4I"/>
<dbReference type="PDBsum" id="8F4J"/>
<dbReference type="PDBsum" id="8F4K"/>
<dbReference type="PDBsum" id="9EVX"/>
<dbReference type="EMDB" id="EMD-12335"/>
<dbReference type="EMDB" id="EMD-12336"/>
<dbReference type="EMDB" id="EMD-12337"/>
<dbReference type="EMDB" id="EMD-50019"/>
<dbReference type="SMR" id="Q8DJ43"/>
<dbReference type="DIP" id="DIP-48493N"/>
<dbReference type="IntAct" id="Q8DJ43">
    <property type="interactions" value="1"/>
</dbReference>
<dbReference type="STRING" id="197221.gene:10747984"/>
<dbReference type="EnsemblBacteria" id="BAC08938">
    <property type="protein sequence ID" value="BAC08938"/>
    <property type="gene ID" value="BAC08938"/>
</dbReference>
<dbReference type="KEGG" id="tel:tsl1386"/>
<dbReference type="PATRIC" id="fig|197221.4.peg.1458"/>
<dbReference type="eggNOG" id="ENOG50332MV">
    <property type="taxonomic scope" value="Bacteria"/>
</dbReference>
<dbReference type="EvolutionaryTrace" id="Q8DJ43"/>
<dbReference type="Proteomes" id="UP000000440">
    <property type="component" value="Chromosome"/>
</dbReference>
<dbReference type="GO" id="GO:0009523">
    <property type="term" value="C:photosystem II"/>
    <property type="evidence" value="ECO:0007669"/>
    <property type="project" value="UniProtKB-KW"/>
</dbReference>
<dbReference type="GO" id="GO:0031676">
    <property type="term" value="C:plasma membrane-derived thylakoid membrane"/>
    <property type="evidence" value="ECO:0007669"/>
    <property type="project" value="UniProtKB-SubCell"/>
</dbReference>
<dbReference type="GO" id="GO:0042301">
    <property type="term" value="F:phosphate ion binding"/>
    <property type="evidence" value="ECO:0007669"/>
    <property type="project" value="InterPro"/>
</dbReference>
<dbReference type="GO" id="GO:0015979">
    <property type="term" value="P:photosynthesis"/>
    <property type="evidence" value="ECO:0007669"/>
    <property type="project" value="UniProtKB-UniRule"/>
</dbReference>
<dbReference type="GO" id="GO:0050821">
    <property type="term" value="P:protein stabilization"/>
    <property type="evidence" value="ECO:0007669"/>
    <property type="project" value="InterPro"/>
</dbReference>
<dbReference type="Gene3D" id="1.20.5.880">
    <property type="entry name" value="Photosystem II reaction center protein H"/>
    <property type="match status" value="1"/>
</dbReference>
<dbReference type="HAMAP" id="MF_00752">
    <property type="entry name" value="PSII_PsbH"/>
    <property type="match status" value="1"/>
</dbReference>
<dbReference type="InterPro" id="IPR001056">
    <property type="entry name" value="PSII_PsbH"/>
</dbReference>
<dbReference type="InterPro" id="IPR036863">
    <property type="entry name" value="PSII_PsbH_sf"/>
</dbReference>
<dbReference type="NCBIfam" id="NF002728">
    <property type="entry name" value="PRK02624.1"/>
    <property type="match status" value="1"/>
</dbReference>
<dbReference type="PANTHER" id="PTHR34469">
    <property type="entry name" value="PHOTOSYSTEM II REACTION CENTER PROTEIN H"/>
    <property type="match status" value="1"/>
</dbReference>
<dbReference type="PANTHER" id="PTHR34469:SF4">
    <property type="entry name" value="PHOTOSYSTEM II REACTION CENTER PROTEIN H"/>
    <property type="match status" value="1"/>
</dbReference>
<dbReference type="Pfam" id="PF00737">
    <property type="entry name" value="PsbH"/>
    <property type="match status" value="1"/>
</dbReference>
<dbReference type="SUPFAM" id="SSF161025">
    <property type="entry name" value="Photosystem II 10 kDa phosphoprotein PsbH"/>
    <property type="match status" value="1"/>
</dbReference>
<accession>Q8DJ43</accession>
<name>PSBH_THEVB</name>
<comment type="function">
    <text evidence="1 4 7 8 11">One of the components of the core complex of photosystem II (PSII), required for its stability and/or assembly. PSII is a light-driven water:plastoquinone oxidoreductase that uses light energy to abstract electrons from H(2)O, generating O(2) and a proton gradient subsequently used for ATP formation. It consists of a core antenna complex that captures photons, and an electron transfer chain that converts photonic excitation into a charge separation.</text>
</comment>
<comment type="cofactor">
    <text evidence="2 3 5 6 7 8 9 10 11 12">PSII binds multiple chlorophylls, carotenoids and specific lipids.</text>
</comment>
<comment type="subunit">
    <text evidence="1 2 3 6 7 8 9 10 11 12 13">PSII is composed of 1 copy each of membrane proteins PsbA, PsbB, PsbC, PsbD, PsbE, PsbF, PsbH, PsbI, PsbJ, PsbK, PsbL, PsbM, PsbT, PsbX, PsbY, PsbZ, Psb30/Ycf12, peripheral proteins PsbO, CyanoQ (PsbQ), PsbU, PsbV and a large number of cofactors. It forms dimeric complexes. Part of a photosystem II (PSII) assembly intermediate complex PSII-I; crystallized from a strain deleted of psbJ, it forms monomeric PSII before addition of the oxygen evolving complex. PSII-I includes 3 assembly factors not found in mature PSII (Psb27, Psb28 and Psb34) (PubMed:33846594).</text>
</comment>
<comment type="subcellular location">
    <subcellularLocation>
        <location evidence="1 2 3 5 6 7 8 9 10 11 12 13">Cellular thylakoid membrane</location>
        <topology evidence="1 2 3 5 6 7 8 9 10 11 12 13">Single-pass membrane protein</topology>
    </subcellularLocation>
</comment>
<comment type="mass spectrometry"/>
<comment type="mass spectrometry"/>
<comment type="mass spectrometry">
    <text>Missing initiator Met and CO(2).</text>
</comment>
<comment type="disruption phenotype">
    <text evidence="4">Not essential for photoautotrophic growth, however PSII is less stable, a considerable amount is missing the oxygen evolving complex, and it is missing PsbX.</text>
</comment>
<comment type="similarity">
    <text evidence="1">Belongs to the PsbH family.</text>
</comment>
<organism>
    <name type="scientific">Thermosynechococcus vestitus (strain NIES-2133 / IAM M-273 / BP-1)</name>
    <dbReference type="NCBI Taxonomy" id="197221"/>
    <lineage>
        <taxon>Bacteria</taxon>
        <taxon>Bacillati</taxon>
        <taxon>Cyanobacteriota</taxon>
        <taxon>Cyanophyceae</taxon>
        <taxon>Acaryochloridales</taxon>
        <taxon>Thermosynechococcaceae</taxon>
        <taxon>Thermosynechococcus</taxon>
    </lineage>
</organism>